<organism>
    <name type="scientific">Homo sapiens</name>
    <name type="common">Human</name>
    <dbReference type="NCBI Taxonomy" id="9606"/>
    <lineage>
        <taxon>Eukaryota</taxon>
        <taxon>Metazoa</taxon>
        <taxon>Chordata</taxon>
        <taxon>Craniata</taxon>
        <taxon>Vertebrata</taxon>
        <taxon>Euteleostomi</taxon>
        <taxon>Mammalia</taxon>
        <taxon>Eutheria</taxon>
        <taxon>Euarchontoglires</taxon>
        <taxon>Primates</taxon>
        <taxon>Haplorrhini</taxon>
        <taxon>Catarrhini</taxon>
        <taxon>Hominidae</taxon>
        <taxon>Homo</taxon>
    </lineage>
</organism>
<dbReference type="EC" id="6.1.1.2" evidence="1"/>
<dbReference type="EMBL" id="AJ242739">
    <property type="protein sequence ID" value="CAB63107.1"/>
    <property type="molecule type" value="mRNA"/>
</dbReference>
<dbReference type="EMBL" id="AK223197">
    <property type="protein sequence ID" value="BAD96917.1"/>
    <property type="molecule type" value="mRNA"/>
</dbReference>
<dbReference type="EMBL" id="AK313740">
    <property type="protein sequence ID" value="BAG36481.1"/>
    <property type="molecule type" value="mRNA"/>
</dbReference>
<dbReference type="EMBL" id="AL359823">
    <property type="status" value="NOT_ANNOTATED_CDS"/>
    <property type="molecule type" value="Genomic_DNA"/>
</dbReference>
<dbReference type="EMBL" id="AL139420">
    <property type="status" value="NOT_ANNOTATED_CDS"/>
    <property type="molecule type" value="Genomic_DNA"/>
</dbReference>
<dbReference type="EMBL" id="AL590288">
    <property type="status" value="NOT_ANNOTATED_CDS"/>
    <property type="molecule type" value="Genomic_DNA"/>
</dbReference>
<dbReference type="EMBL" id="CH471122">
    <property type="protein sequence ID" value="EAW56693.1"/>
    <property type="molecule type" value="Genomic_DNA"/>
</dbReference>
<dbReference type="EMBL" id="BC044575">
    <property type="protein sequence ID" value="AAH44575.1"/>
    <property type="molecule type" value="mRNA"/>
</dbReference>
<dbReference type="EMBL" id="BC039889">
    <property type="status" value="NOT_ANNOTATED_CDS"/>
    <property type="molecule type" value="mRNA"/>
</dbReference>
<dbReference type="CCDS" id="CCDS30817.1">
    <molecule id="Q9UGM6-2"/>
</dbReference>
<dbReference type="CCDS" id="CCDS900.1">
    <molecule id="Q9UGM6-1"/>
</dbReference>
<dbReference type="RefSeq" id="NP_056651.1">
    <molecule id="Q9UGM6-1"/>
    <property type="nucleotide sequence ID" value="NM_015836.4"/>
</dbReference>
<dbReference type="RefSeq" id="NP_957715.1">
    <molecule id="Q9UGM6-2"/>
    <property type="nucleotide sequence ID" value="NM_201263.2"/>
</dbReference>
<dbReference type="PDB" id="5EKD">
    <property type="method" value="X-ray"/>
    <property type="resolution" value="1.82 A"/>
    <property type="chains" value="A/B=18-360"/>
</dbReference>
<dbReference type="PDBsum" id="5EKD"/>
<dbReference type="SMR" id="Q9UGM6"/>
<dbReference type="BioGRID" id="115633">
    <property type="interactions" value="35"/>
</dbReference>
<dbReference type="FunCoup" id="Q9UGM6">
    <property type="interactions" value="1490"/>
</dbReference>
<dbReference type="IntAct" id="Q9UGM6">
    <property type="interactions" value="7"/>
</dbReference>
<dbReference type="STRING" id="9606.ENSP00000235521"/>
<dbReference type="DrugBank" id="DB00150">
    <property type="generic name" value="Tryptophan"/>
</dbReference>
<dbReference type="GlyGen" id="Q9UGM6">
    <property type="glycosylation" value="1 site, 1 O-linked glycan (1 site)"/>
</dbReference>
<dbReference type="iPTMnet" id="Q9UGM6"/>
<dbReference type="PhosphoSitePlus" id="Q9UGM6"/>
<dbReference type="BioMuta" id="WARS2"/>
<dbReference type="DMDM" id="21362967"/>
<dbReference type="jPOST" id="Q9UGM6"/>
<dbReference type="MassIVE" id="Q9UGM6"/>
<dbReference type="PaxDb" id="9606-ENSP00000235521"/>
<dbReference type="PeptideAtlas" id="Q9UGM6"/>
<dbReference type="ProteomicsDB" id="84244">
    <molecule id="Q9UGM6-1"/>
</dbReference>
<dbReference type="ProteomicsDB" id="84245">
    <molecule id="Q9UGM6-2"/>
</dbReference>
<dbReference type="Pumba" id="Q9UGM6"/>
<dbReference type="Antibodypedia" id="33903">
    <property type="antibodies" value="78 antibodies from 27 providers"/>
</dbReference>
<dbReference type="DNASU" id="10352"/>
<dbReference type="Ensembl" id="ENST00000235521.5">
    <molecule id="Q9UGM6-1"/>
    <property type="protein sequence ID" value="ENSP00000235521.4"/>
    <property type="gene ID" value="ENSG00000116874.12"/>
</dbReference>
<dbReference type="Ensembl" id="ENST00000369426.9">
    <molecule id="Q9UGM6-2"/>
    <property type="protein sequence ID" value="ENSP00000358434.5"/>
    <property type="gene ID" value="ENSG00000116874.12"/>
</dbReference>
<dbReference type="GeneID" id="10352"/>
<dbReference type="KEGG" id="hsa:10352"/>
<dbReference type="MANE-Select" id="ENST00000235521.5">
    <property type="protein sequence ID" value="ENSP00000235521.4"/>
    <property type="RefSeq nucleotide sequence ID" value="NM_015836.4"/>
    <property type="RefSeq protein sequence ID" value="NP_056651.1"/>
</dbReference>
<dbReference type="UCSC" id="uc001ehm.4">
    <molecule id="Q9UGM6-1"/>
    <property type="organism name" value="human"/>
</dbReference>
<dbReference type="AGR" id="HGNC:12730"/>
<dbReference type="CTD" id="10352"/>
<dbReference type="DisGeNET" id="10352"/>
<dbReference type="GeneCards" id="WARS2"/>
<dbReference type="GeneReviews" id="WARS2"/>
<dbReference type="HGNC" id="HGNC:12730">
    <property type="gene designation" value="WARS2"/>
</dbReference>
<dbReference type="HPA" id="ENSG00000116874">
    <property type="expression patterns" value="Low tissue specificity"/>
</dbReference>
<dbReference type="MalaCards" id="WARS2"/>
<dbReference type="MIM" id="604733">
    <property type="type" value="gene"/>
</dbReference>
<dbReference type="MIM" id="617710">
    <property type="type" value="phenotype"/>
</dbReference>
<dbReference type="MIM" id="619738">
    <property type="type" value="phenotype"/>
</dbReference>
<dbReference type="neXtProt" id="NX_Q9UGM6"/>
<dbReference type="OpenTargets" id="ENSG00000116874"/>
<dbReference type="Orphanet" id="572798">
    <property type="disease" value="WARS2-related combined oxidative phosphorylation defect"/>
</dbReference>
<dbReference type="PharmGKB" id="PA37341"/>
<dbReference type="VEuPathDB" id="HostDB:ENSG00000116874"/>
<dbReference type="eggNOG" id="KOG2713">
    <property type="taxonomic scope" value="Eukaryota"/>
</dbReference>
<dbReference type="GeneTree" id="ENSGT00940000153724"/>
<dbReference type="HOGENOM" id="CLU_029244_3_0_1"/>
<dbReference type="InParanoid" id="Q9UGM6"/>
<dbReference type="OMA" id="GWGQFKP"/>
<dbReference type="OrthoDB" id="15808at2759"/>
<dbReference type="PAN-GO" id="Q9UGM6">
    <property type="GO annotations" value="4 GO annotations based on evolutionary models"/>
</dbReference>
<dbReference type="PhylomeDB" id="Q9UGM6"/>
<dbReference type="TreeFam" id="TF314321"/>
<dbReference type="BRENDA" id="6.1.1.2">
    <property type="organism ID" value="2681"/>
</dbReference>
<dbReference type="PathwayCommons" id="Q9UGM6"/>
<dbReference type="Reactome" id="R-HSA-379726">
    <property type="pathway name" value="Mitochondrial tRNA aminoacylation"/>
</dbReference>
<dbReference type="SignaLink" id="Q9UGM6"/>
<dbReference type="SIGNOR" id="Q9UGM6"/>
<dbReference type="BioGRID-ORCS" id="10352">
    <property type="hits" value="258 hits in 1189 CRISPR screens"/>
</dbReference>
<dbReference type="ChiTaRS" id="WARS2">
    <property type="organism name" value="human"/>
</dbReference>
<dbReference type="GeneWiki" id="WARS2"/>
<dbReference type="GenomeRNAi" id="10352"/>
<dbReference type="Pharos" id="Q9UGM6">
    <property type="development level" value="Tbio"/>
</dbReference>
<dbReference type="PRO" id="PR:Q9UGM6"/>
<dbReference type="Proteomes" id="UP000005640">
    <property type="component" value="Chromosome 1"/>
</dbReference>
<dbReference type="RNAct" id="Q9UGM6">
    <property type="molecule type" value="protein"/>
</dbReference>
<dbReference type="Bgee" id="ENSG00000116874">
    <property type="expression patterns" value="Expressed in primordial germ cell in gonad and 144 other cell types or tissues"/>
</dbReference>
<dbReference type="GO" id="GO:0005759">
    <property type="term" value="C:mitochondrial matrix"/>
    <property type="evidence" value="ECO:0000314"/>
    <property type="project" value="UniProtKB"/>
</dbReference>
<dbReference type="GO" id="GO:0005739">
    <property type="term" value="C:mitochondrion"/>
    <property type="evidence" value="ECO:0000314"/>
    <property type="project" value="HPA"/>
</dbReference>
<dbReference type="GO" id="GO:0005654">
    <property type="term" value="C:nucleoplasm"/>
    <property type="evidence" value="ECO:0000314"/>
    <property type="project" value="HPA"/>
</dbReference>
<dbReference type="GO" id="GO:0005886">
    <property type="term" value="C:plasma membrane"/>
    <property type="evidence" value="ECO:0000314"/>
    <property type="project" value="HPA"/>
</dbReference>
<dbReference type="GO" id="GO:0005524">
    <property type="term" value="F:ATP binding"/>
    <property type="evidence" value="ECO:0007669"/>
    <property type="project" value="UniProtKB-KW"/>
</dbReference>
<dbReference type="GO" id="GO:0004830">
    <property type="term" value="F:tryptophan-tRNA ligase activity"/>
    <property type="evidence" value="ECO:0000314"/>
    <property type="project" value="UniProtKB"/>
</dbReference>
<dbReference type="GO" id="GO:0070183">
    <property type="term" value="P:mitochondrial tryptophanyl-tRNA aminoacylation"/>
    <property type="evidence" value="ECO:0000318"/>
    <property type="project" value="GO_Central"/>
</dbReference>
<dbReference type="GO" id="GO:0045766">
    <property type="term" value="P:positive regulation of angiogenesis"/>
    <property type="evidence" value="ECO:0007669"/>
    <property type="project" value="Ensembl"/>
</dbReference>
<dbReference type="GO" id="GO:0006418">
    <property type="term" value="P:tRNA aminoacylation for protein translation"/>
    <property type="evidence" value="ECO:0000304"/>
    <property type="project" value="Reactome"/>
</dbReference>
<dbReference type="GO" id="GO:0001570">
    <property type="term" value="P:vasculogenesis"/>
    <property type="evidence" value="ECO:0007669"/>
    <property type="project" value="Ensembl"/>
</dbReference>
<dbReference type="CDD" id="cd00806">
    <property type="entry name" value="TrpRS_core"/>
    <property type="match status" value="1"/>
</dbReference>
<dbReference type="FunFam" id="3.40.50.620:FF:000082">
    <property type="entry name" value="MSW1p Mitochondrial tryptophanyl-tRNA synthetase"/>
    <property type="match status" value="1"/>
</dbReference>
<dbReference type="FunFam" id="1.10.240.10:FF:000002">
    <property type="entry name" value="Tryptophan--tRNA ligase"/>
    <property type="match status" value="1"/>
</dbReference>
<dbReference type="Gene3D" id="3.40.50.620">
    <property type="entry name" value="HUPs"/>
    <property type="match status" value="1"/>
</dbReference>
<dbReference type="Gene3D" id="1.10.240.10">
    <property type="entry name" value="Tyrosyl-Transfer RNA Synthetase"/>
    <property type="match status" value="1"/>
</dbReference>
<dbReference type="HAMAP" id="MF_00140_B">
    <property type="entry name" value="Trp_tRNA_synth_B"/>
    <property type="match status" value="1"/>
</dbReference>
<dbReference type="InterPro" id="IPR001412">
    <property type="entry name" value="aa-tRNA-synth_I_CS"/>
</dbReference>
<dbReference type="InterPro" id="IPR002305">
    <property type="entry name" value="aa-tRNA-synth_Ic"/>
</dbReference>
<dbReference type="InterPro" id="IPR014729">
    <property type="entry name" value="Rossmann-like_a/b/a_fold"/>
</dbReference>
<dbReference type="InterPro" id="IPR002306">
    <property type="entry name" value="Trp-tRNA-ligase"/>
</dbReference>
<dbReference type="InterPro" id="IPR024109">
    <property type="entry name" value="Trp-tRNA-ligase_bac-type"/>
</dbReference>
<dbReference type="InterPro" id="IPR050203">
    <property type="entry name" value="Trp-tRNA_synthetase"/>
</dbReference>
<dbReference type="NCBIfam" id="TIGR00233">
    <property type="entry name" value="trpS"/>
    <property type="match status" value="1"/>
</dbReference>
<dbReference type="PANTHER" id="PTHR43766">
    <property type="entry name" value="TRYPTOPHAN--TRNA LIGASE, MITOCHONDRIAL"/>
    <property type="match status" value="1"/>
</dbReference>
<dbReference type="PANTHER" id="PTHR43766:SF1">
    <property type="entry name" value="TRYPTOPHAN--TRNA LIGASE, MITOCHONDRIAL"/>
    <property type="match status" value="1"/>
</dbReference>
<dbReference type="Pfam" id="PF00579">
    <property type="entry name" value="tRNA-synt_1b"/>
    <property type="match status" value="1"/>
</dbReference>
<dbReference type="PRINTS" id="PR01039">
    <property type="entry name" value="TRNASYNTHTRP"/>
</dbReference>
<dbReference type="SUPFAM" id="SSF52374">
    <property type="entry name" value="Nucleotidylyl transferase"/>
    <property type="match status" value="1"/>
</dbReference>
<dbReference type="PROSITE" id="PS00178">
    <property type="entry name" value="AA_TRNA_LIGASE_I"/>
    <property type="match status" value="1"/>
</dbReference>
<protein>
    <recommendedName>
        <fullName>Tryptophan--tRNA ligase, mitochondrial</fullName>
        <ecNumber evidence="1">6.1.1.2</ecNumber>
    </recommendedName>
    <alternativeName>
        <fullName>(Mt)TrpRS</fullName>
    </alternativeName>
    <alternativeName>
        <fullName>Tryptophanyl-tRNA synthetase</fullName>
        <shortName>TrpRS</shortName>
    </alternativeName>
</protein>
<proteinExistence type="evidence at protein level"/>
<name>SYWM_HUMAN</name>
<gene>
    <name type="primary">WARS2</name>
</gene>
<comment type="function">
    <text evidence="1">Catalyzes the attachment of tryptophan to tRNA(Trp) in a two-step reaction: tryptophan is first activated by ATP to form Trp-AMP and then transferred to the acceptor end of tRNA(Trp).</text>
</comment>
<comment type="catalytic activity">
    <reaction evidence="1">
        <text>tRNA(Trp) + L-tryptophan + ATP = L-tryptophyl-tRNA(Trp) + AMP + diphosphate + H(+)</text>
        <dbReference type="Rhea" id="RHEA:24080"/>
        <dbReference type="Rhea" id="RHEA-COMP:9671"/>
        <dbReference type="Rhea" id="RHEA-COMP:9705"/>
        <dbReference type="ChEBI" id="CHEBI:15378"/>
        <dbReference type="ChEBI" id="CHEBI:30616"/>
        <dbReference type="ChEBI" id="CHEBI:33019"/>
        <dbReference type="ChEBI" id="CHEBI:57912"/>
        <dbReference type="ChEBI" id="CHEBI:78442"/>
        <dbReference type="ChEBI" id="CHEBI:78535"/>
        <dbReference type="ChEBI" id="CHEBI:456215"/>
        <dbReference type="EC" id="6.1.1.2"/>
    </reaction>
</comment>
<comment type="biophysicochemical properties">
    <kinetics>
        <KM evidence="1">27 uM for tryptophan</KM>
        <KM evidence="1">401 uM for ATP</KM>
    </kinetics>
</comment>
<comment type="subcellular location">
    <subcellularLocation>
        <location evidence="3">Mitochondrion matrix</location>
    </subcellularLocation>
    <subcellularLocation>
        <location evidence="1">Mitochondrion</location>
    </subcellularLocation>
</comment>
<comment type="alternative products">
    <event type="alternative splicing"/>
    <isoform>
        <id>Q9UGM6-1</id>
        <name>1</name>
        <sequence type="displayed"/>
    </isoform>
    <isoform>
        <id>Q9UGM6-2</id>
        <name>2</name>
        <sequence type="described" ref="VSP_041414 VSP_041415"/>
    </isoform>
</comment>
<comment type="tissue specificity">
    <text evidence="3">Brain.</text>
</comment>
<comment type="disease" evidence="3 4 5 7 10">
    <disease id="DI-05113">
        <name>Neurodevelopmental disorder, mitochondrial, with abnormal movements and lactic acidosis, with or without seizures</name>
        <acronym>NEMMLAS</acronym>
        <description>An autosomal recessive, mitochondrial disorder with a broad phenotypic spectrum ranging from severe neonatal lactic acidosis, encephalomyopathy and early death to an attenuated course with milder manifestations. Clinical features include delayed psychomotor development, intellectual disability, hypotonia, dystonia, ataxia, and spasticity. Severe combined respiratory chain deficiency may be found in severely affected individuals.</description>
        <dbReference type="MIM" id="617710"/>
    </disease>
    <text>The disease is caused by variants affecting the gene represented in this entry.</text>
</comment>
<comment type="disease" evidence="6 8 9">
    <disease id="DI-06334">
        <name>Parkinsonism-dystonia 3, childhood-onset</name>
        <acronym>PKDYS3</acronym>
        <description>An autosomal recessive neurodegenerative disorder with onset in infancy or early childhood. Affected individuals present with progressive movement abnormalities, including parkinsonism with tremor, dystonia, myoclonus ataxia, and hyperkinetic movements such as ballismus. The parkinsonism features may be responsive to treatment with levodopa, although many patients develop levodopa-induced dyskinesia. Some patients may have mild cognitive impairment or psychiatric disturbances.</description>
        <dbReference type="MIM" id="619738"/>
    </disease>
    <text>The disease is caused by variants affecting the gene represented in this entry.</text>
</comment>
<comment type="similarity">
    <text evidence="12">Belongs to the class-I aminoacyl-tRNA synthetase family.</text>
</comment>
<evidence type="ECO:0000269" key="1">
    <source>
    </source>
</evidence>
<evidence type="ECO:0000269" key="2">
    <source>
    </source>
</evidence>
<evidence type="ECO:0000269" key="3">
    <source>
    </source>
</evidence>
<evidence type="ECO:0000269" key="4">
    <source>
    </source>
</evidence>
<evidence type="ECO:0000269" key="5">
    <source>
    </source>
</evidence>
<evidence type="ECO:0000269" key="6">
    <source>
    </source>
</evidence>
<evidence type="ECO:0000269" key="7">
    <source>
    </source>
</evidence>
<evidence type="ECO:0000269" key="8">
    <source>
    </source>
</evidence>
<evidence type="ECO:0000269" key="9">
    <source>
    </source>
</evidence>
<evidence type="ECO:0000269" key="10">
    <source>
    </source>
</evidence>
<evidence type="ECO:0000303" key="11">
    <source>
    </source>
</evidence>
<evidence type="ECO:0000305" key="12"/>
<evidence type="ECO:0007744" key="13">
    <source>
        <dbReference type="PDB" id="5EKD"/>
    </source>
</evidence>
<evidence type="ECO:0007829" key="14">
    <source>
        <dbReference type="PDB" id="5EKD"/>
    </source>
</evidence>
<feature type="transit peptide" description="Mitochondrion">
    <location>
        <begin position="1"/>
        <end position="18"/>
    </location>
</feature>
<feature type="chain" id="PRO_0000035828" description="Tryptophan--tRNA ligase, mitochondrial">
    <location>
        <begin position="19"/>
        <end position="360"/>
    </location>
</feature>
<feature type="binding site" evidence="13">
    <location>
        <position position="42"/>
    </location>
    <ligand>
        <name>ATP</name>
        <dbReference type="ChEBI" id="CHEBI:30616"/>
    </ligand>
</feature>
<feature type="binding site" evidence="13">
    <location>
        <begin position="48"/>
        <end position="51"/>
    </location>
    <ligand>
        <name>ATP</name>
        <dbReference type="ChEBI" id="CHEBI:30616"/>
    </ligand>
</feature>
<feature type="binding site" evidence="13">
    <location>
        <position position="167"/>
    </location>
    <ligand>
        <name>L-tryptophan</name>
        <dbReference type="ChEBI" id="CHEBI:57912"/>
    </ligand>
</feature>
<feature type="binding site" evidence="13">
    <location>
        <begin position="179"/>
        <end position="181"/>
    </location>
    <ligand>
        <name>ATP</name>
        <dbReference type="ChEBI" id="CHEBI:30616"/>
    </ligand>
</feature>
<feature type="binding site" evidence="13">
    <location>
        <position position="217"/>
    </location>
    <ligand>
        <name>ATP</name>
        <dbReference type="ChEBI" id="CHEBI:30616"/>
    </ligand>
</feature>
<feature type="binding site" evidence="13">
    <location>
        <begin position="226"/>
        <end position="230"/>
    </location>
    <ligand>
        <name>ATP</name>
        <dbReference type="ChEBI" id="CHEBI:30616"/>
    </ligand>
</feature>
<feature type="splice variant" id="VSP_041414" description="In isoform 2." evidence="11">
    <original>TSMKKVKSL</original>
    <variation>SMCVLVFLT</variation>
    <location>
        <begin position="212"/>
        <end position="220"/>
    </location>
</feature>
<feature type="splice variant" id="VSP_041415" description="In isoform 2." evidence="11">
    <location>
        <begin position="221"/>
        <end position="360"/>
    </location>
</feature>
<feature type="sequence variant" id="VAR_078435" description="In NEMMLAS and PKDYS3; hypomorphic variant, clinically relevant when present in trans with an amorphic variant; impaired mitochondrial localization; dbSNP:rs139548132." evidence="3 6 8 9">
    <original>W</original>
    <variation>G</variation>
    <location>
        <position position="13"/>
    </location>
</feature>
<feature type="sequence variant" id="VAR_079734" description="In NEMMLAS; dbSNP:rs1553241795." evidence="5">
    <original>G</original>
    <variation>V</variation>
    <location>
        <position position="45"/>
    </location>
</feature>
<feature type="sequence variant" id="VAR_086908" description="In PKDYS3; dbSNP:rs1571323203." evidence="8 9">
    <original>G</original>
    <variation>D</variation>
    <location>
        <position position="50"/>
    </location>
</feature>
<feature type="sequence variant" id="VAR_028848" description="In dbSNP:rs11552864." evidence="2">
    <original>G</original>
    <variation>S</variation>
    <location>
        <position position="50"/>
    </location>
</feature>
<feature type="sequence variant" id="VAR_079735" description="In NEMMLAS; uncertain significance; dbSNP:rs766501807." evidence="5">
    <original>H</original>
    <variation>Q</variation>
    <location>
        <position position="77"/>
    </location>
</feature>
<feature type="sequence variant" id="VAR_079736" description="In NEMMLAS and PKDYS3; dbSNP:rs772867219." evidence="4 9">
    <location>
        <position position="100"/>
    </location>
</feature>
<feature type="sequence variant" id="VAR_079737" description="In NEMMLAS; dbSNP:rs912133959." evidence="5">
    <original>V</original>
    <variation>L</variation>
    <location>
        <position position="178"/>
    </location>
</feature>
<feature type="sequence variant" id="VAR_086909" description="In PKDYS3." evidence="9">
    <location>
        <begin position="208"/>
        <end position="360"/>
    </location>
</feature>
<feature type="sequence variant" id="VAR_086910" description="In PKDYS3; dbSNP:rs1647600390." evidence="6">
    <original>S</original>
    <variation>W</variation>
    <location>
        <position position="228"/>
    </location>
</feature>
<feature type="sequence variant" id="VAR_020217" description="In dbSNP:rs3790549.">
    <original>A</original>
    <variation>P</variation>
    <location>
        <position position="267"/>
    </location>
</feature>
<feature type="sequence variant" id="VAR_086911" description="In NEMMLAS; dbSNP:rs765904496." evidence="7 10">
    <original>V</original>
    <variation>G</variation>
    <location>
        <position position="278"/>
    </location>
</feature>
<feature type="sequence variant" id="VAR_079738" description="In NEMMLAS; dbSNP:rs145867327." evidence="4 5 7 10">
    <original>K</original>
    <variation>M</variation>
    <location>
        <position position="313"/>
    </location>
</feature>
<feature type="sequence variant" id="VAR_079739" description="In NEMMLAS; dbSNP:rs1170780314." evidence="5">
    <original>V</original>
    <variation>L</variation>
    <location>
        <position position="349"/>
    </location>
</feature>
<feature type="sequence variant" id="VAR_079740" description="In NEMMLAS; uncertain significance; dbSNP:rs563341344." evidence="5">
    <original>E</original>
    <variation>K</variation>
    <location>
        <position position="352"/>
    </location>
</feature>
<feature type="sequence variant" id="VAR_052407" description="In dbSNP:rs17023101.">
    <original>L</original>
    <variation>P</variation>
    <location>
        <position position="360"/>
    </location>
</feature>
<feature type="sequence conflict" description="In Ref. 3; BAD96917." evidence="12" ref="3">
    <original>H</original>
    <variation>R</variation>
    <location>
        <position position="151"/>
    </location>
</feature>
<feature type="strand" evidence="14">
    <location>
        <begin position="37"/>
        <end position="41"/>
    </location>
</feature>
<feature type="strand" evidence="14">
    <location>
        <begin position="43"/>
        <end position="45"/>
    </location>
</feature>
<feature type="helix" evidence="14">
    <location>
        <begin position="49"/>
        <end position="54"/>
    </location>
</feature>
<feature type="helix" evidence="14">
    <location>
        <begin position="56"/>
        <end position="65"/>
    </location>
</feature>
<feature type="strand" evidence="14">
    <location>
        <begin position="69"/>
        <end position="73"/>
    </location>
</feature>
<feature type="helix" evidence="14">
    <location>
        <begin position="75"/>
        <end position="78"/>
    </location>
</feature>
<feature type="helix" evidence="14">
    <location>
        <begin position="85"/>
        <end position="102"/>
    </location>
</feature>
<feature type="turn" evidence="14">
    <location>
        <begin position="106"/>
        <end position="108"/>
    </location>
</feature>
<feature type="strand" evidence="14">
    <location>
        <begin position="109"/>
        <end position="113"/>
    </location>
</feature>
<feature type="helix" evidence="14">
    <location>
        <begin position="114"/>
        <end position="116"/>
    </location>
</feature>
<feature type="helix" evidence="14">
    <location>
        <begin position="119"/>
        <end position="128"/>
    </location>
</feature>
<feature type="helix" evidence="14">
    <location>
        <begin position="133"/>
        <end position="137"/>
    </location>
</feature>
<feature type="helix" evidence="14">
    <location>
        <begin position="140"/>
        <end position="143"/>
    </location>
</feature>
<feature type="helix" evidence="14">
    <location>
        <begin position="147"/>
        <end position="152"/>
    </location>
</feature>
<feature type="helix" evidence="14">
    <location>
        <begin position="155"/>
        <end position="169"/>
    </location>
</feature>
<feature type="turn" evidence="14">
    <location>
        <begin position="170"/>
        <end position="172"/>
    </location>
</feature>
<feature type="strand" evidence="14">
    <location>
        <begin position="175"/>
        <end position="177"/>
    </location>
</feature>
<feature type="helix" evidence="14">
    <location>
        <begin position="180"/>
        <end position="182"/>
    </location>
</feature>
<feature type="helix" evidence="14">
    <location>
        <begin position="183"/>
        <end position="200"/>
    </location>
</feature>
<feature type="strand" evidence="14">
    <location>
        <begin position="208"/>
        <end position="210"/>
    </location>
</feature>
<feature type="turn" evidence="14">
    <location>
        <begin position="213"/>
        <end position="216"/>
    </location>
</feature>
<feature type="helix" evidence="14">
    <location>
        <begin position="234"/>
        <end position="236"/>
    </location>
</feature>
<feature type="helix" evidence="14">
    <location>
        <begin position="244"/>
        <end position="253"/>
    </location>
</feature>
<feature type="turn" evidence="14">
    <location>
        <begin position="266"/>
        <end position="268"/>
    </location>
</feature>
<feature type="helix" evidence="14">
    <location>
        <begin position="270"/>
        <end position="283"/>
    </location>
</feature>
<feature type="helix" evidence="14">
    <location>
        <begin position="287"/>
        <end position="293"/>
    </location>
</feature>
<feature type="turn" evidence="14">
    <location>
        <begin position="294"/>
        <end position="296"/>
    </location>
</feature>
<feature type="helix" evidence="14">
    <location>
        <begin position="299"/>
        <end position="324"/>
    </location>
</feature>
<feature type="helix" evidence="14">
    <location>
        <begin position="328"/>
        <end position="357"/>
    </location>
</feature>
<keyword id="KW-0002">3D-structure</keyword>
<keyword id="KW-0025">Alternative splicing</keyword>
<keyword id="KW-0030">Aminoacyl-tRNA synthetase</keyword>
<keyword id="KW-0067">ATP-binding</keyword>
<keyword id="KW-0225">Disease variant</keyword>
<keyword id="KW-1023">Dystonia</keyword>
<keyword id="KW-0436">Ligase</keyword>
<keyword id="KW-0496">Mitochondrion</keyword>
<keyword id="KW-0547">Nucleotide-binding</keyword>
<keyword id="KW-0908">Parkinsonism</keyword>
<keyword id="KW-1274">Primary mitochondrial disease</keyword>
<keyword id="KW-0648">Protein biosynthesis</keyword>
<keyword id="KW-1267">Proteomics identification</keyword>
<keyword id="KW-1185">Reference proteome</keyword>
<keyword id="KW-0809">Transit peptide</keyword>
<reference key="1">
    <citation type="journal article" date="2000" name="J. Biol. Chem.">
        <title>Identification and characterization of human mitochondrial tryptophanyl-tRNA synthetase.</title>
        <authorList>
            <person name="Jorgensen R."/>
            <person name="Soegaard T.M.M."/>
            <person name="Rossing A.B."/>
            <person name="Martensen P.M."/>
            <person name="Justesen J."/>
        </authorList>
    </citation>
    <scope>NUCLEOTIDE SEQUENCE [MRNA] (ISOFORM 1)</scope>
    <scope>FUNCTION</scope>
    <scope>CATALYTIC ACTIVITY</scope>
    <scope>SUBCELLULAR LOCATION</scope>
    <scope>BIOPHYSICOCHEMICAL PROPERTIES</scope>
</reference>
<reference key="2">
    <citation type="journal article" date="2004" name="Nat. Genet.">
        <title>Complete sequencing and characterization of 21,243 full-length human cDNAs.</title>
        <authorList>
            <person name="Ota T."/>
            <person name="Suzuki Y."/>
            <person name="Nishikawa T."/>
            <person name="Otsuki T."/>
            <person name="Sugiyama T."/>
            <person name="Irie R."/>
            <person name="Wakamatsu A."/>
            <person name="Hayashi K."/>
            <person name="Sato H."/>
            <person name="Nagai K."/>
            <person name="Kimura K."/>
            <person name="Makita H."/>
            <person name="Sekine M."/>
            <person name="Obayashi M."/>
            <person name="Nishi T."/>
            <person name="Shibahara T."/>
            <person name="Tanaka T."/>
            <person name="Ishii S."/>
            <person name="Yamamoto J."/>
            <person name="Saito K."/>
            <person name="Kawai Y."/>
            <person name="Isono Y."/>
            <person name="Nakamura Y."/>
            <person name="Nagahari K."/>
            <person name="Murakami K."/>
            <person name="Yasuda T."/>
            <person name="Iwayanagi T."/>
            <person name="Wagatsuma M."/>
            <person name="Shiratori A."/>
            <person name="Sudo H."/>
            <person name="Hosoiri T."/>
            <person name="Kaku Y."/>
            <person name="Kodaira H."/>
            <person name="Kondo H."/>
            <person name="Sugawara M."/>
            <person name="Takahashi M."/>
            <person name="Kanda K."/>
            <person name="Yokoi T."/>
            <person name="Furuya T."/>
            <person name="Kikkawa E."/>
            <person name="Omura Y."/>
            <person name="Abe K."/>
            <person name="Kamihara K."/>
            <person name="Katsuta N."/>
            <person name="Sato K."/>
            <person name="Tanikawa M."/>
            <person name="Yamazaki M."/>
            <person name="Ninomiya K."/>
            <person name="Ishibashi T."/>
            <person name="Yamashita H."/>
            <person name="Murakawa K."/>
            <person name="Fujimori K."/>
            <person name="Tanai H."/>
            <person name="Kimata M."/>
            <person name="Watanabe M."/>
            <person name="Hiraoka S."/>
            <person name="Chiba Y."/>
            <person name="Ishida S."/>
            <person name="Ono Y."/>
            <person name="Takiguchi S."/>
            <person name="Watanabe S."/>
            <person name="Yosida M."/>
            <person name="Hotuta T."/>
            <person name="Kusano J."/>
            <person name="Kanehori K."/>
            <person name="Takahashi-Fujii A."/>
            <person name="Hara H."/>
            <person name="Tanase T.-O."/>
            <person name="Nomura Y."/>
            <person name="Togiya S."/>
            <person name="Komai F."/>
            <person name="Hara R."/>
            <person name="Takeuchi K."/>
            <person name="Arita M."/>
            <person name="Imose N."/>
            <person name="Musashino K."/>
            <person name="Yuuki H."/>
            <person name="Oshima A."/>
            <person name="Sasaki N."/>
            <person name="Aotsuka S."/>
            <person name="Yoshikawa Y."/>
            <person name="Matsunawa H."/>
            <person name="Ichihara T."/>
            <person name="Shiohata N."/>
            <person name="Sano S."/>
            <person name="Moriya S."/>
            <person name="Momiyama H."/>
            <person name="Satoh N."/>
            <person name="Takami S."/>
            <person name="Terashima Y."/>
            <person name="Suzuki O."/>
            <person name="Nakagawa S."/>
            <person name="Senoh A."/>
            <person name="Mizoguchi H."/>
            <person name="Goto Y."/>
            <person name="Shimizu F."/>
            <person name="Wakebe H."/>
            <person name="Hishigaki H."/>
            <person name="Watanabe T."/>
            <person name="Sugiyama A."/>
            <person name="Takemoto M."/>
            <person name="Kawakami B."/>
            <person name="Yamazaki M."/>
            <person name="Watanabe K."/>
            <person name="Kumagai A."/>
            <person name="Itakura S."/>
            <person name="Fukuzumi Y."/>
            <person name="Fujimori Y."/>
            <person name="Komiyama M."/>
            <person name="Tashiro H."/>
            <person name="Tanigami A."/>
            <person name="Fujiwara T."/>
            <person name="Ono T."/>
            <person name="Yamada K."/>
            <person name="Fujii Y."/>
            <person name="Ozaki K."/>
            <person name="Hirao M."/>
            <person name="Ohmori Y."/>
            <person name="Kawabata A."/>
            <person name="Hikiji T."/>
            <person name="Kobatake N."/>
            <person name="Inagaki H."/>
            <person name="Ikema Y."/>
            <person name="Okamoto S."/>
            <person name="Okitani R."/>
            <person name="Kawakami T."/>
            <person name="Noguchi S."/>
            <person name="Itoh T."/>
            <person name="Shigeta K."/>
            <person name="Senba T."/>
            <person name="Matsumura K."/>
            <person name="Nakajima Y."/>
            <person name="Mizuno T."/>
            <person name="Morinaga M."/>
            <person name="Sasaki M."/>
            <person name="Togashi T."/>
            <person name="Oyama M."/>
            <person name="Hata H."/>
            <person name="Watanabe M."/>
            <person name="Komatsu T."/>
            <person name="Mizushima-Sugano J."/>
            <person name="Satoh T."/>
            <person name="Shirai Y."/>
            <person name="Takahashi Y."/>
            <person name="Nakagawa K."/>
            <person name="Okumura K."/>
            <person name="Nagase T."/>
            <person name="Nomura N."/>
            <person name="Kikuchi H."/>
            <person name="Masuho Y."/>
            <person name="Yamashita R."/>
            <person name="Nakai K."/>
            <person name="Yada T."/>
            <person name="Nakamura Y."/>
            <person name="Ohara O."/>
            <person name="Isogai T."/>
            <person name="Sugano S."/>
        </authorList>
    </citation>
    <scope>NUCLEOTIDE SEQUENCE [LARGE SCALE MRNA] (ISOFORM 1)</scope>
</reference>
<reference key="3">
    <citation type="submission" date="2005-04" db="EMBL/GenBank/DDBJ databases">
        <authorList>
            <person name="Suzuki Y."/>
            <person name="Sugano S."/>
            <person name="Totoki Y."/>
            <person name="Toyoda A."/>
            <person name="Takeda T."/>
            <person name="Sakaki Y."/>
            <person name="Tanaka A."/>
            <person name="Yokoyama S."/>
        </authorList>
    </citation>
    <scope>NUCLEOTIDE SEQUENCE [LARGE SCALE MRNA] (ISOFORM 1)</scope>
    <source>
        <tissue>Kidney proximal tubule</tissue>
    </source>
</reference>
<reference key="4">
    <citation type="journal article" date="2006" name="Nature">
        <title>The DNA sequence and biological annotation of human chromosome 1.</title>
        <authorList>
            <person name="Gregory S.G."/>
            <person name="Barlow K.F."/>
            <person name="McLay K.E."/>
            <person name="Kaul R."/>
            <person name="Swarbreck D."/>
            <person name="Dunham A."/>
            <person name="Scott C.E."/>
            <person name="Howe K.L."/>
            <person name="Woodfine K."/>
            <person name="Spencer C.C.A."/>
            <person name="Jones M.C."/>
            <person name="Gillson C."/>
            <person name="Searle S."/>
            <person name="Zhou Y."/>
            <person name="Kokocinski F."/>
            <person name="McDonald L."/>
            <person name="Evans R."/>
            <person name="Phillips K."/>
            <person name="Atkinson A."/>
            <person name="Cooper R."/>
            <person name="Jones C."/>
            <person name="Hall R.E."/>
            <person name="Andrews T.D."/>
            <person name="Lloyd C."/>
            <person name="Ainscough R."/>
            <person name="Almeida J.P."/>
            <person name="Ambrose K.D."/>
            <person name="Anderson F."/>
            <person name="Andrew R.W."/>
            <person name="Ashwell R.I.S."/>
            <person name="Aubin K."/>
            <person name="Babbage A.K."/>
            <person name="Bagguley C.L."/>
            <person name="Bailey J."/>
            <person name="Beasley H."/>
            <person name="Bethel G."/>
            <person name="Bird C.P."/>
            <person name="Bray-Allen S."/>
            <person name="Brown J.Y."/>
            <person name="Brown A.J."/>
            <person name="Buckley D."/>
            <person name="Burton J."/>
            <person name="Bye J."/>
            <person name="Carder C."/>
            <person name="Chapman J.C."/>
            <person name="Clark S.Y."/>
            <person name="Clarke G."/>
            <person name="Clee C."/>
            <person name="Cobley V."/>
            <person name="Collier R.E."/>
            <person name="Corby N."/>
            <person name="Coville G.J."/>
            <person name="Davies J."/>
            <person name="Deadman R."/>
            <person name="Dunn M."/>
            <person name="Earthrowl M."/>
            <person name="Ellington A.G."/>
            <person name="Errington H."/>
            <person name="Frankish A."/>
            <person name="Frankland J."/>
            <person name="French L."/>
            <person name="Garner P."/>
            <person name="Garnett J."/>
            <person name="Gay L."/>
            <person name="Ghori M.R.J."/>
            <person name="Gibson R."/>
            <person name="Gilby L.M."/>
            <person name="Gillett W."/>
            <person name="Glithero R.J."/>
            <person name="Grafham D.V."/>
            <person name="Griffiths C."/>
            <person name="Griffiths-Jones S."/>
            <person name="Grocock R."/>
            <person name="Hammond S."/>
            <person name="Harrison E.S.I."/>
            <person name="Hart E."/>
            <person name="Haugen E."/>
            <person name="Heath P.D."/>
            <person name="Holmes S."/>
            <person name="Holt K."/>
            <person name="Howden P.J."/>
            <person name="Hunt A.R."/>
            <person name="Hunt S.E."/>
            <person name="Hunter G."/>
            <person name="Isherwood J."/>
            <person name="James R."/>
            <person name="Johnson C."/>
            <person name="Johnson D."/>
            <person name="Joy A."/>
            <person name="Kay M."/>
            <person name="Kershaw J.K."/>
            <person name="Kibukawa M."/>
            <person name="Kimberley A.M."/>
            <person name="King A."/>
            <person name="Knights A.J."/>
            <person name="Lad H."/>
            <person name="Laird G."/>
            <person name="Lawlor S."/>
            <person name="Leongamornlert D.A."/>
            <person name="Lloyd D.M."/>
            <person name="Loveland J."/>
            <person name="Lovell J."/>
            <person name="Lush M.J."/>
            <person name="Lyne R."/>
            <person name="Martin S."/>
            <person name="Mashreghi-Mohammadi M."/>
            <person name="Matthews L."/>
            <person name="Matthews N.S.W."/>
            <person name="McLaren S."/>
            <person name="Milne S."/>
            <person name="Mistry S."/>
            <person name="Moore M.J.F."/>
            <person name="Nickerson T."/>
            <person name="O'Dell C.N."/>
            <person name="Oliver K."/>
            <person name="Palmeiri A."/>
            <person name="Palmer S.A."/>
            <person name="Parker A."/>
            <person name="Patel D."/>
            <person name="Pearce A.V."/>
            <person name="Peck A.I."/>
            <person name="Pelan S."/>
            <person name="Phelps K."/>
            <person name="Phillimore B.J."/>
            <person name="Plumb R."/>
            <person name="Rajan J."/>
            <person name="Raymond C."/>
            <person name="Rouse G."/>
            <person name="Saenphimmachak C."/>
            <person name="Sehra H.K."/>
            <person name="Sheridan E."/>
            <person name="Shownkeen R."/>
            <person name="Sims S."/>
            <person name="Skuce C.D."/>
            <person name="Smith M."/>
            <person name="Steward C."/>
            <person name="Subramanian S."/>
            <person name="Sycamore N."/>
            <person name="Tracey A."/>
            <person name="Tromans A."/>
            <person name="Van Helmond Z."/>
            <person name="Wall M."/>
            <person name="Wallis J.M."/>
            <person name="White S."/>
            <person name="Whitehead S.L."/>
            <person name="Wilkinson J.E."/>
            <person name="Willey D.L."/>
            <person name="Williams H."/>
            <person name="Wilming L."/>
            <person name="Wray P.W."/>
            <person name="Wu Z."/>
            <person name="Coulson A."/>
            <person name="Vaudin M."/>
            <person name="Sulston J.E."/>
            <person name="Durbin R.M."/>
            <person name="Hubbard T."/>
            <person name="Wooster R."/>
            <person name="Dunham I."/>
            <person name="Carter N.P."/>
            <person name="McVean G."/>
            <person name="Ross M.T."/>
            <person name="Harrow J."/>
            <person name="Olson M.V."/>
            <person name="Beck S."/>
            <person name="Rogers J."/>
            <person name="Bentley D.R."/>
        </authorList>
    </citation>
    <scope>NUCLEOTIDE SEQUENCE [LARGE SCALE GENOMIC DNA]</scope>
</reference>
<reference key="5">
    <citation type="submission" date="2005-07" db="EMBL/GenBank/DDBJ databases">
        <authorList>
            <person name="Mural R.J."/>
            <person name="Istrail S."/>
            <person name="Sutton G.G."/>
            <person name="Florea L."/>
            <person name="Halpern A.L."/>
            <person name="Mobarry C.M."/>
            <person name="Lippert R."/>
            <person name="Walenz B."/>
            <person name="Shatkay H."/>
            <person name="Dew I."/>
            <person name="Miller J.R."/>
            <person name="Flanigan M.J."/>
            <person name="Edwards N.J."/>
            <person name="Bolanos R."/>
            <person name="Fasulo D."/>
            <person name="Halldorsson B.V."/>
            <person name="Hannenhalli S."/>
            <person name="Turner R."/>
            <person name="Yooseph S."/>
            <person name="Lu F."/>
            <person name="Nusskern D.R."/>
            <person name="Shue B.C."/>
            <person name="Zheng X.H."/>
            <person name="Zhong F."/>
            <person name="Delcher A.L."/>
            <person name="Huson D.H."/>
            <person name="Kravitz S.A."/>
            <person name="Mouchard L."/>
            <person name="Reinert K."/>
            <person name="Remington K.A."/>
            <person name="Clark A.G."/>
            <person name="Waterman M.S."/>
            <person name="Eichler E.E."/>
            <person name="Adams M.D."/>
            <person name="Hunkapiller M.W."/>
            <person name="Myers E.W."/>
            <person name="Venter J.C."/>
        </authorList>
    </citation>
    <scope>NUCLEOTIDE SEQUENCE [LARGE SCALE GENOMIC DNA]</scope>
</reference>
<reference key="6">
    <citation type="journal article" date="2004" name="Genome Res.">
        <title>The status, quality, and expansion of the NIH full-length cDNA project: the Mammalian Gene Collection (MGC).</title>
        <authorList>
            <consortium name="The MGC Project Team"/>
        </authorList>
    </citation>
    <scope>NUCLEOTIDE SEQUENCE [LARGE SCALE MRNA] (ISOFORMS 1 AND 2)</scope>
    <scope>VARIANT SER-50</scope>
    <source>
        <tissue>Brain</tissue>
    </source>
</reference>
<reference key="7">
    <citation type="journal article" date="2011" name="BMC Syst. Biol.">
        <title>Initial characterization of the human central proteome.</title>
        <authorList>
            <person name="Burkard T.R."/>
            <person name="Planyavsky M."/>
            <person name="Kaupe I."/>
            <person name="Breitwieser F.P."/>
            <person name="Buerckstuemmer T."/>
            <person name="Bennett K.L."/>
            <person name="Superti-Furga G."/>
            <person name="Colinge J."/>
        </authorList>
    </citation>
    <scope>IDENTIFICATION BY MASS SPECTROMETRY [LARGE SCALE ANALYSIS]</scope>
</reference>
<reference key="8">
    <citation type="journal article" date="2015" name="Proteomics">
        <title>N-terminome analysis of the human mitochondrial proteome.</title>
        <authorList>
            <person name="Vaca Jacome A.S."/>
            <person name="Rabilloud T."/>
            <person name="Schaeffer-Reiss C."/>
            <person name="Rompais M."/>
            <person name="Ayoub D."/>
            <person name="Lane L."/>
            <person name="Bairoch A."/>
            <person name="Van Dorsselaer A."/>
            <person name="Carapito C."/>
        </authorList>
    </citation>
    <scope>IDENTIFICATION BY MASS SPECTROMETRY [LARGE SCALE ANALYSIS]</scope>
</reference>
<reference evidence="13" key="9">
    <citation type="submission" date="2015-11" db="PDB data bank">
        <title>Binding of Mg2+ATP Enhances Inhibition of Human Mitochondrial Tryptophanyl-tRNA Synthetase by Indolmycin.</title>
        <authorList>
            <person name="Williams T.L."/>
            <person name="Carter C.W."/>
        </authorList>
    </citation>
    <scope>X-RAY CRYSTALLOGRAPHY (1.82 ANGSTROMS) OF 18-360 IN COMPLEX WITH ATP; MANGANESE AND SUBSTRATE ANALOG</scope>
</reference>
<reference key="10">
    <citation type="journal article" date="2017" name="Am. J. Med. Genet. A">
        <title>Deficiency of WARS2, encoding mitochondrial tryptophanyl tRNA synthetase, causes severe infantile onset leukoencephalopathy.</title>
        <authorList>
            <person name="Theisen B.E."/>
            <person name="Rumyantseva A."/>
            <person name="Cohen J.S."/>
            <person name="Alcaraz W.A."/>
            <person name="Shinde D.N."/>
            <person name="Tang S."/>
            <person name="Srivastava S."/>
            <person name="Pevsner J."/>
            <person name="Trifunovic A."/>
            <person name="Fatemi A."/>
        </authorList>
    </citation>
    <scope>INVOLVEMENT IN NEMMLAS</scope>
    <scope>VARIANTS NEMMLAS LEU-100 DEL AND MET-313</scope>
</reference>
<reference key="11">
    <citation type="journal article" date="2018" name="Clin. Genet.">
        <title>Biallelic mutations in mitochondrial tryptophanyl-tRNA synthetase cause Levodopa-responsive infantile-onset Parkinsonism.</title>
        <authorList>
            <person name="Burke E.A."/>
            <person name="Frucht S.J."/>
            <person name="Thompson K."/>
            <person name="Wolfe L.A."/>
            <person name="Yokoyama T."/>
            <person name="Bertoni M."/>
            <person name="Huang Y."/>
            <person name="Sincan M."/>
            <person name="Adams D.R."/>
            <person name="Taylor R.W."/>
            <person name="Gahl W.A."/>
            <person name="Toro C."/>
            <person name="Malicdan M.C.V."/>
        </authorList>
    </citation>
    <scope>VARIANTS PKDYS3 GLY-13 AND TRP-228</scope>
    <scope>INVOLVEMENT IN PKDYS3</scope>
</reference>
<reference key="12">
    <citation type="journal article" date="2017" name="Hum. Mutat.">
        <title>Biallelic variants in WARS2 encoding mitochondrial tryptophanyl-tRNA synthase in six individuals with mitochondrial encephalopathy.</title>
        <authorList>
            <person name="Wortmann S.B."/>
            <person name="Timal S."/>
            <person name="Venselaar H."/>
            <person name="Wintjes L.T."/>
            <person name="Kopajtich R."/>
            <person name="Feichtinger R.G."/>
            <person name="Onnekink C."/>
            <person name="Muehlmeister M."/>
            <person name="Brandt U."/>
            <person name="Smeitink J.A."/>
            <person name="Veltman J.A."/>
            <person name="Sperl W."/>
            <person name="Lefeber D."/>
            <person name="Pruijn G."/>
            <person name="Stojanovic V."/>
            <person name="Freisinger P."/>
            <person name="V Spronsen F."/>
            <person name="Derks T.G."/>
            <person name="Veenstra-Knol H.E."/>
            <person name="Mayr J.A."/>
            <person name="Roetig A."/>
            <person name="Tarnopolsky M."/>
            <person name="Prokisch H."/>
            <person name="Rodenburg R.J."/>
        </authorList>
    </citation>
    <scope>INVOLVEMENT IN NEMMLAS</scope>
    <scope>VARIANTS NEMMLAS VAL-45; GLN-77; LEU-178; MET-313; LEU-349 AND LYS-352</scope>
</reference>
<reference key="13">
    <citation type="journal article" date="2017" name="Hum. Mutat.">
        <title>Mutations of the aminoacyl-tRNA-synthetases SARS and WARS2 are implicated in the aetiology of autosomal recessive intellectual disability.</title>
        <authorList>
            <person name="Musante L."/>
            <person name="Puettmann L."/>
            <person name="Kahrizi K."/>
            <person name="Garshasbi M."/>
            <person name="Hu H."/>
            <person name="Stehr H."/>
            <person name="Lipkowitz B."/>
            <person name="Otto S."/>
            <person name="Jensen L.R."/>
            <person name="Tzschach A."/>
            <person name="Jamali P."/>
            <person name="Wienker T."/>
            <person name="Najmabadi H."/>
            <person name="Ropers H.H."/>
            <person name="Kuss A.W."/>
        </authorList>
    </citation>
    <scope>VARIANT NEMMLAS GLY-13</scope>
    <scope>CHARACTERIZATION OF VARIANT NEMMLAS GLY-13</scope>
    <scope>SUBCELLULAR LOCATION</scope>
    <scope>TISSUE SPECIFICITY</scope>
    <scope>INVOLVEMENT IN NEMMLAS</scope>
</reference>
<reference key="14">
    <citation type="journal article" date="2019" name="Mol. Genet. Genomic Med.">
        <title>Mutations in the mitochondrial tryptophanyl-tRNA synthetase cause growth retardation and progressive leukoencephalopathy.</title>
        <authorList>
            <person name="Maffezzini C."/>
            <person name="Laine I."/>
            <person name="Dallabona C."/>
            <person name="Clemente P."/>
            <person name="Calvo-Garrido J."/>
            <person name="Wibom R."/>
            <person name="Naess K."/>
            <person name="Barbaro M."/>
            <person name="Falk A."/>
            <person name="Donnini C."/>
            <person name="Freyer C."/>
            <person name="Wredenberg A."/>
            <person name="Wedell A."/>
        </authorList>
    </citation>
    <scope>VARIANTS NEMMLAS GLY-278 AND MET-313</scope>
</reference>
<reference key="15">
    <citation type="journal article" date="2020" name="Mov. Disord. Clin. Pract.">
        <title>Mutation of the WARS2 Gene as the Cause of a Severe Hyperkinetic Movement Disorder.</title>
        <authorList>
            <person name="Huebers A."/>
            <person name="Huppertz H.J."/>
            <person name="Wortmann S.B."/>
            <person name="Kassubek J."/>
        </authorList>
    </citation>
    <scope>VARIANTS PKDYS3 GLY-13 AND ASP-50</scope>
    <scope>INVOLVEMENT IN PKDYS3</scope>
</reference>
<reference key="16">
    <citation type="journal article" date="2022" name="Parkinsonism Relat. Disord.">
        <title>WARS2 mutations cause dopa-responsive early-onset parkinsonism and progressive myoclonus ataxia.</title>
        <authorList>
            <person name="Skorvanek M."/>
            <person name="Rektorova I."/>
            <person name="Mandemakers W."/>
            <person name="Wagner M."/>
            <person name="Steinfeld R."/>
            <person name="Orec L."/>
            <person name="Han V."/>
            <person name="Pavelekova P."/>
            <person name="Lackova A."/>
            <person name="Kulcsarova K."/>
            <person name="Ostrozovicova M."/>
            <person name="Gdovinova Z."/>
            <person name="Plecko B."/>
            <person name="Brunet T."/>
            <person name="Berutti R."/>
            <person name="Kuipers D.J.S."/>
            <person name="Boumeester V."/>
            <person name="Havrankova P."/>
            <person name="Tijssen M.A.J."/>
            <person name="Kaiyrzhanov R."/>
            <person name="Rizig M."/>
            <person name="Houlden H."/>
            <person name="Winkelmann J."/>
            <person name="Bonifati V."/>
            <person name="Zech M."/>
            <person name="Jech R."/>
        </authorList>
    </citation>
    <scope>VARIANTS PKDYS3 GLY-13; ASP-50; LEU-100 DEL AND 208-GLU--LEU-360 DEL</scope>
</reference>
<reference key="17">
    <citation type="journal article" date="2022" name="Parkinsonism Relat. Disord.">
        <title>A relatively common hypomorphic variant in WARS2 causes monogenic disease.</title>
        <authorList>
            <person name="Ilinca A."/>
            <person name="Kafantari E."/>
            <person name="Puschmann A."/>
        </authorList>
    </citation>
    <scope>VARIANTS NEMMLAS GLY-278 AND MET-313</scope>
</reference>
<accession>Q9UGM6</accession>
<accession>B1ALR1</accession>
<accession>B2R9D4</accession>
<accession>Q53FT4</accession>
<accession>Q5VUD2</accession>
<accession>Q86TQ0</accession>
<sequence>MALHSMRKARERWSFIRALHKGSAAAPALQKDSKKRVFSGIQPTGILHLGNYLGAIESWVRLQDEYDSVLYSIVDLHSITVPQDPAVLRQSILDMTAVLLACGINPEKSILFQQSQVSEHTQLSWILSCMVRLPRLQHLHQWKAKTTKQKHDGTVGLLTYPVLQAADILLYKSTHVPVGEDQVQHMELVQDLAQGFNKKYGEFFPVPESILTSMKKVKSLRDPSAKMSKSDPDKLATVRITDSPEEIVQKFRKAVTDFTSEVTYDPAGRAGVSNIVAVHAAVTGLSVEEVVRRSAGMNTARYKLAVADAVIEKFAPIKREIEKLKLDKDHLEKVLQIGSAKAKELAYTVCQEVKKLVGFL</sequence>